<reference key="1">
    <citation type="journal article" date="2003" name="Proc. Natl. Acad. Sci. U.S.A.">
        <title>Complete genome sequence of Lactobacillus plantarum WCFS1.</title>
        <authorList>
            <person name="Kleerebezem M."/>
            <person name="Boekhorst J."/>
            <person name="van Kranenburg R."/>
            <person name="Molenaar D."/>
            <person name="Kuipers O.P."/>
            <person name="Leer R."/>
            <person name="Tarchini R."/>
            <person name="Peters S.A."/>
            <person name="Sandbrink H.M."/>
            <person name="Fiers M.W.E.J."/>
            <person name="Stiekema W."/>
            <person name="Klein Lankhorst R.M."/>
            <person name="Bron P.A."/>
            <person name="Hoffer S.M."/>
            <person name="Nierop Groot M.N."/>
            <person name="Kerkhoven R."/>
            <person name="De Vries M."/>
            <person name="Ursing B."/>
            <person name="De Vos W.M."/>
            <person name="Siezen R.J."/>
        </authorList>
    </citation>
    <scope>NUCLEOTIDE SEQUENCE [LARGE SCALE GENOMIC DNA]</scope>
    <source>
        <strain>ATCC BAA-793 / NCIMB 8826 / WCFS1</strain>
    </source>
</reference>
<reference key="2">
    <citation type="journal article" date="2012" name="J. Bacteriol.">
        <title>Complete resequencing and reannotation of the Lactobacillus plantarum WCFS1 genome.</title>
        <authorList>
            <person name="Siezen R.J."/>
            <person name="Francke C."/>
            <person name="Renckens B."/>
            <person name="Boekhorst J."/>
            <person name="Wels M."/>
            <person name="Kleerebezem M."/>
            <person name="van Hijum S.A."/>
        </authorList>
    </citation>
    <scope>NUCLEOTIDE SEQUENCE [LARGE SCALE GENOMIC DNA]</scope>
    <scope>GENOME REANNOTATION</scope>
    <source>
        <strain>ATCC BAA-793 / NCIMB 8826 / WCFS1</strain>
    </source>
</reference>
<keyword id="KW-0963">Cytoplasm</keyword>
<keyword id="KW-0441">Lipid A biosynthesis</keyword>
<keyword id="KW-0444">Lipid biosynthesis</keyword>
<keyword id="KW-0443">Lipid metabolism</keyword>
<keyword id="KW-0456">Lyase</keyword>
<keyword id="KW-1185">Reference proteome</keyword>
<protein>
    <recommendedName>
        <fullName evidence="1">3-hydroxyacyl-[acyl-carrier-protein] dehydratase FabZ</fullName>
        <ecNumber evidence="1">4.2.1.59</ecNumber>
    </recommendedName>
    <alternativeName>
        <fullName evidence="1">(3R)-hydroxymyristoyl-[acyl-carrier-protein] dehydratase</fullName>
        <shortName evidence="1">(3R)-hydroxymyristoyl-ACP dehydrase</shortName>
    </alternativeName>
    <alternativeName>
        <fullName evidence="1">Beta-hydroxyacyl-ACP dehydratase</fullName>
    </alternativeName>
</protein>
<accession>Q88WG9</accession>
<accession>F9UP34</accession>
<proteinExistence type="inferred from homology"/>
<dbReference type="EC" id="4.2.1.59" evidence="1"/>
<dbReference type="EMBL" id="AL935263">
    <property type="protein sequence ID" value="CCC78973.1"/>
    <property type="molecule type" value="Genomic_DNA"/>
</dbReference>
<dbReference type="RefSeq" id="WP_003640408.1">
    <property type="nucleotide sequence ID" value="NC_004567.2"/>
</dbReference>
<dbReference type="RefSeq" id="YP_004889487.1">
    <property type="nucleotide sequence ID" value="NC_004567.2"/>
</dbReference>
<dbReference type="SMR" id="Q88WG9"/>
<dbReference type="STRING" id="220668.lp_1670"/>
<dbReference type="EnsemblBacteria" id="CCC78973">
    <property type="protein sequence ID" value="CCC78973"/>
    <property type="gene ID" value="lp_1670"/>
</dbReference>
<dbReference type="GeneID" id="89669040"/>
<dbReference type="KEGG" id="lpl:lp_1670"/>
<dbReference type="PATRIC" id="fig|220668.9.peg.1409"/>
<dbReference type="eggNOG" id="COG0764">
    <property type="taxonomic scope" value="Bacteria"/>
</dbReference>
<dbReference type="HOGENOM" id="CLU_078912_1_1_9"/>
<dbReference type="OrthoDB" id="9772788at2"/>
<dbReference type="PhylomeDB" id="Q88WG9"/>
<dbReference type="Proteomes" id="UP000000432">
    <property type="component" value="Chromosome"/>
</dbReference>
<dbReference type="GO" id="GO:0005737">
    <property type="term" value="C:cytoplasm"/>
    <property type="evidence" value="ECO:0007669"/>
    <property type="project" value="UniProtKB-SubCell"/>
</dbReference>
<dbReference type="GO" id="GO:0016020">
    <property type="term" value="C:membrane"/>
    <property type="evidence" value="ECO:0007669"/>
    <property type="project" value="GOC"/>
</dbReference>
<dbReference type="GO" id="GO:0019171">
    <property type="term" value="F:(3R)-hydroxyacyl-[acyl-carrier-protein] dehydratase activity"/>
    <property type="evidence" value="ECO:0007669"/>
    <property type="project" value="UniProtKB-EC"/>
</dbReference>
<dbReference type="GO" id="GO:0006633">
    <property type="term" value="P:fatty acid biosynthetic process"/>
    <property type="evidence" value="ECO:0007669"/>
    <property type="project" value="UniProtKB-UniRule"/>
</dbReference>
<dbReference type="GO" id="GO:0009245">
    <property type="term" value="P:lipid A biosynthetic process"/>
    <property type="evidence" value="ECO:0007669"/>
    <property type="project" value="UniProtKB-UniRule"/>
</dbReference>
<dbReference type="CDD" id="cd01288">
    <property type="entry name" value="FabZ"/>
    <property type="match status" value="1"/>
</dbReference>
<dbReference type="FunFam" id="3.10.129.10:FF:000001">
    <property type="entry name" value="3-hydroxyacyl-[acyl-carrier-protein] dehydratase FabZ"/>
    <property type="match status" value="1"/>
</dbReference>
<dbReference type="Gene3D" id="3.10.129.10">
    <property type="entry name" value="Hotdog Thioesterase"/>
    <property type="match status" value="1"/>
</dbReference>
<dbReference type="HAMAP" id="MF_00406">
    <property type="entry name" value="FabZ"/>
    <property type="match status" value="1"/>
</dbReference>
<dbReference type="InterPro" id="IPR013114">
    <property type="entry name" value="FabA_FabZ"/>
</dbReference>
<dbReference type="InterPro" id="IPR010084">
    <property type="entry name" value="FabZ"/>
</dbReference>
<dbReference type="InterPro" id="IPR029069">
    <property type="entry name" value="HotDog_dom_sf"/>
</dbReference>
<dbReference type="NCBIfam" id="TIGR01750">
    <property type="entry name" value="fabZ"/>
    <property type="match status" value="1"/>
</dbReference>
<dbReference type="NCBIfam" id="NF000582">
    <property type="entry name" value="PRK00006.1"/>
    <property type="match status" value="1"/>
</dbReference>
<dbReference type="PANTHER" id="PTHR30272">
    <property type="entry name" value="3-HYDROXYACYL-[ACYL-CARRIER-PROTEIN] DEHYDRATASE"/>
    <property type="match status" value="1"/>
</dbReference>
<dbReference type="PANTHER" id="PTHR30272:SF1">
    <property type="entry name" value="3-HYDROXYACYL-[ACYL-CARRIER-PROTEIN] DEHYDRATASE"/>
    <property type="match status" value="1"/>
</dbReference>
<dbReference type="Pfam" id="PF07977">
    <property type="entry name" value="FabA"/>
    <property type="match status" value="1"/>
</dbReference>
<dbReference type="SUPFAM" id="SSF54637">
    <property type="entry name" value="Thioesterase/thiol ester dehydrase-isomerase"/>
    <property type="match status" value="1"/>
</dbReference>
<name>FABZ_LACPL</name>
<gene>
    <name evidence="1" type="primary">fabZ</name>
    <name type="synonym">fabZ1</name>
    <name type="ordered locus">lp_1670</name>
</gene>
<evidence type="ECO:0000255" key="1">
    <source>
        <dbReference type="HAMAP-Rule" id="MF_00406"/>
    </source>
</evidence>
<feature type="chain" id="PRO_0000091693" description="3-hydroxyacyl-[acyl-carrier-protein] dehydratase FabZ">
    <location>
        <begin position="1"/>
        <end position="147"/>
    </location>
</feature>
<feature type="active site" evidence="1">
    <location>
        <position position="50"/>
    </location>
</feature>
<sequence>MSVLEASEIMQLIPNRYPILFMDRVDELNPGESIVVTKNVTINESFFQGHFPGNPVMPGVLIIEALAQAASILILKSEKFAGKTAYLGAIKDAKFRKIVRPGDVLKLHVQMVKQRSNMGTVSCQAMVGDKAACTTDLTFIVGATDSK</sequence>
<comment type="function">
    <text evidence="1">Involved in unsaturated fatty acids biosynthesis. Catalyzes the dehydration of short chain beta-hydroxyacyl-ACPs and long chain saturated and unsaturated beta-hydroxyacyl-ACPs.</text>
</comment>
<comment type="catalytic activity">
    <reaction evidence="1">
        <text>a (3R)-hydroxyacyl-[ACP] = a (2E)-enoyl-[ACP] + H2O</text>
        <dbReference type="Rhea" id="RHEA:13097"/>
        <dbReference type="Rhea" id="RHEA-COMP:9925"/>
        <dbReference type="Rhea" id="RHEA-COMP:9945"/>
        <dbReference type="ChEBI" id="CHEBI:15377"/>
        <dbReference type="ChEBI" id="CHEBI:78784"/>
        <dbReference type="ChEBI" id="CHEBI:78827"/>
        <dbReference type="EC" id="4.2.1.59"/>
    </reaction>
</comment>
<comment type="subcellular location">
    <subcellularLocation>
        <location evidence="1">Cytoplasm</location>
    </subcellularLocation>
</comment>
<comment type="similarity">
    <text evidence="1">Belongs to the thioester dehydratase family. FabZ subfamily.</text>
</comment>
<organism>
    <name type="scientific">Lactiplantibacillus plantarum (strain ATCC BAA-793 / NCIMB 8826 / WCFS1)</name>
    <name type="common">Lactobacillus plantarum</name>
    <dbReference type="NCBI Taxonomy" id="220668"/>
    <lineage>
        <taxon>Bacteria</taxon>
        <taxon>Bacillati</taxon>
        <taxon>Bacillota</taxon>
        <taxon>Bacilli</taxon>
        <taxon>Lactobacillales</taxon>
        <taxon>Lactobacillaceae</taxon>
        <taxon>Lactiplantibacillus</taxon>
    </lineage>
</organism>